<keyword id="KW-0002">3D-structure</keyword>
<keyword id="KW-0963">Cytoplasm</keyword>
<keyword id="KW-0349">Heme</keyword>
<keyword id="KW-0408">Iron</keyword>
<keyword id="KW-0479">Metal-binding</keyword>
<keyword id="KW-0503">Monooxygenase</keyword>
<keyword id="KW-0560">Oxidoreductase</keyword>
<keyword id="KW-1185">Reference proteome</keyword>
<evidence type="ECO:0000250" key="1"/>
<evidence type="ECO:0000250" key="2">
    <source>
        <dbReference type="UniProtKB" id="O48782"/>
    </source>
</evidence>
<evidence type="ECO:0000255" key="3"/>
<evidence type="ECO:0000269" key="4">
    <source>
    </source>
</evidence>
<evidence type="ECO:0000305" key="5"/>
<evidence type="ECO:0007829" key="6">
    <source>
        <dbReference type="PDB" id="4OZ5"/>
    </source>
</evidence>
<feature type="chain" id="PRO_0000049578" description="Heme-degrading monooxygenase HmoB">
    <location>
        <begin position="1"/>
        <end position="166"/>
    </location>
</feature>
<feature type="domain" description="ABM">
    <location>
        <begin position="66"/>
        <end position="153"/>
    </location>
</feature>
<feature type="binding site" evidence="3">
    <location>
        <position position="33"/>
    </location>
    <ligand>
        <name>Fe cation</name>
        <dbReference type="ChEBI" id="CHEBI:24875"/>
    </ligand>
</feature>
<feature type="binding site" description="axial binding residue" evidence="3">
    <location>
        <position position="138"/>
    </location>
    <ligand>
        <name>heme</name>
        <dbReference type="ChEBI" id="CHEBI:30413"/>
    </ligand>
    <ligandPart>
        <name>Fe</name>
        <dbReference type="ChEBI" id="CHEBI:18248"/>
    </ligandPart>
</feature>
<feature type="site" description="Transition state stabilizer" evidence="3">
    <location>
        <position position="128"/>
    </location>
</feature>
<feature type="mutagenesis site" description="Retains the ability to degrade haem, albeit at a reduced rate relative to the wild-type." evidence="4">
    <original>N</original>
    <variation>A</variation>
    <location>
        <position position="70"/>
    </location>
</feature>
<feature type="strand" evidence="6">
    <location>
        <begin position="2"/>
        <end position="8"/>
    </location>
</feature>
<feature type="helix" evidence="6">
    <location>
        <begin position="10"/>
        <end position="19"/>
    </location>
</feature>
<feature type="strand" evidence="6">
    <location>
        <begin position="25"/>
        <end position="32"/>
    </location>
</feature>
<feature type="strand" evidence="6">
    <location>
        <begin position="34"/>
        <end position="42"/>
    </location>
</feature>
<feature type="strand" evidence="6">
    <location>
        <begin position="46"/>
        <end position="48"/>
    </location>
</feature>
<feature type="strand" evidence="6">
    <location>
        <begin position="50"/>
        <end position="59"/>
    </location>
</feature>
<feature type="strand" evidence="6">
    <location>
        <begin position="65"/>
        <end position="74"/>
    </location>
</feature>
<feature type="turn" evidence="6">
    <location>
        <begin position="76"/>
        <end position="78"/>
    </location>
</feature>
<feature type="helix" evidence="6">
    <location>
        <begin position="79"/>
        <end position="86"/>
    </location>
</feature>
<feature type="strand" evidence="6">
    <location>
        <begin position="99"/>
        <end position="121"/>
    </location>
</feature>
<feature type="helix" evidence="6">
    <location>
        <begin position="122"/>
        <end position="130"/>
    </location>
</feature>
<feature type="turn" evidence="6">
    <location>
        <begin position="132"/>
        <end position="134"/>
    </location>
</feature>
<feature type="strand" evidence="6">
    <location>
        <begin position="135"/>
        <end position="138"/>
    </location>
</feature>
<feature type="strand" evidence="6">
    <location>
        <begin position="153"/>
        <end position="155"/>
    </location>
</feature>
<feature type="strand" evidence="6">
    <location>
        <begin position="158"/>
        <end position="164"/>
    </location>
</feature>
<sequence length="166" mass="18828">MKVYITYGTADFLKTIVQKHPSENILLMQGQENAILIHETNGDTVFQAPHAYEVIDQVGEIKHPGFAVLNNIAVTQEGRPLFENRFKNRAGKVENEPGFEAIRVLRPLDSDTYVILTLWETESAFQDWQQSGSYKEAHKKRDTSAGIDTTSIFSRPSYVTTYFAVE</sequence>
<protein>
    <recommendedName>
        <fullName>Heme-degrading monooxygenase HmoB</fullName>
        <ecNumber evidence="2">1.14.14.18</ecNumber>
    </recommendedName>
    <alternativeName>
        <fullName>Heme oxygenase</fullName>
    </alternativeName>
</protein>
<reference key="1">
    <citation type="journal article" date="1993" name="J. Bacteriol.">
        <title>Cloning, nucleotide sequence, and regulation of the Bacillus subtilis pbpF gene, which codes for a putative class A high-molecular-weight penicillin-binding protein.</title>
        <authorList>
            <person name="Popham D.L."/>
            <person name="Setlow P."/>
        </authorList>
    </citation>
    <scope>NUCLEOTIDE SEQUENCE [GENOMIC DNA]</scope>
    <source>
        <strain>168</strain>
    </source>
</reference>
<reference key="2">
    <citation type="journal article" date="1998" name="Microbiology">
        <title>The 172 kb prkA-addAB region from 83 degrees to 97 degrees of the Bacillus subtilis chromosome contains several dysfunctional genes, the glyB marker, many genes encoding transporter proteins, and the ubiquitous hit gene.</title>
        <authorList>
            <person name="Noback M.A."/>
            <person name="Holsappel S."/>
            <person name="Kiewiet R."/>
            <person name="Terpstra P."/>
            <person name="Wambutt R."/>
            <person name="Wedler H."/>
            <person name="Venema G."/>
            <person name="Bron S."/>
        </authorList>
    </citation>
    <scope>NUCLEOTIDE SEQUENCE [GENOMIC DNA]</scope>
    <source>
        <strain>168</strain>
    </source>
</reference>
<reference key="3">
    <citation type="journal article" date="1997" name="Nature">
        <title>The complete genome sequence of the Gram-positive bacterium Bacillus subtilis.</title>
        <authorList>
            <person name="Kunst F."/>
            <person name="Ogasawara N."/>
            <person name="Moszer I."/>
            <person name="Albertini A.M."/>
            <person name="Alloni G."/>
            <person name="Azevedo V."/>
            <person name="Bertero M.G."/>
            <person name="Bessieres P."/>
            <person name="Bolotin A."/>
            <person name="Borchert S."/>
            <person name="Borriss R."/>
            <person name="Boursier L."/>
            <person name="Brans A."/>
            <person name="Braun M."/>
            <person name="Brignell S.C."/>
            <person name="Bron S."/>
            <person name="Brouillet S."/>
            <person name="Bruschi C.V."/>
            <person name="Caldwell B."/>
            <person name="Capuano V."/>
            <person name="Carter N.M."/>
            <person name="Choi S.-K."/>
            <person name="Codani J.-J."/>
            <person name="Connerton I.F."/>
            <person name="Cummings N.J."/>
            <person name="Daniel R.A."/>
            <person name="Denizot F."/>
            <person name="Devine K.M."/>
            <person name="Duesterhoeft A."/>
            <person name="Ehrlich S.D."/>
            <person name="Emmerson P.T."/>
            <person name="Entian K.-D."/>
            <person name="Errington J."/>
            <person name="Fabret C."/>
            <person name="Ferrari E."/>
            <person name="Foulger D."/>
            <person name="Fritz C."/>
            <person name="Fujita M."/>
            <person name="Fujita Y."/>
            <person name="Fuma S."/>
            <person name="Galizzi A."/>
            <person name="Galleron N."/>
            <person name="Ghim S.-Y."/>
            <person name="Glaser P."/>
            <person name="Goffeau A."/>
            <person name="Golightly E.J."/>
            <person name="Grandi G."/>
            <person name="Guiseppi G."/>
            <person name="Guy B.J."/>
            <person name="Haga K."/>
            <person name="Haiech J."/>
            <person name="Harwood C.R."/>
            <person name="Henaut A."/>
            <person name="Hilbert H."/>
            <person name="Holsappel S."/>
            <person name="Hosono S."/>
            <person name="Hullo M.-F."/>
            <person name="Itaya M."/>
            <person name="Jones L.-M."/>
            <person name="Joris B."/>
            <person name="Karamata D."/>
            <person name="Kasahara Y."/>
            <person name="Klaerr-Blanchard M."/>
            <person name="Klein C."/>
            <person name="Kobayashi Y."/>
            <person name="Koetter P."/>
            <person name="Koningstein G."/>
            <person name="Krogh S."/>
            <person name="Kumano M."/>
            <person name="Kurita K."/>
            <person name="Lapidus A."/>
            <person name="Lardinois S."/>
            <person name="Lauber J."/>
            <person name="Lazarevic V."/>
            <person name="Lee S.-M."/>
            <person name="Levine A."/>
            <person name="Liu H."/>
            <person name="Masuda S."/>
            <person name="Mauel C."/>
            <person name="Medigue C."/>
            <person name="Medina N."/>
            <person name="Mellado R.P."/>
            <person name="Mizuno M."/>
            <person name="Moestl D."/>
            <person name="Nakai S."/>
            <person name="Noback M."/>
            <person name="Noone D."/>
            <person name="O'Reilly M."/>
            <person name="Ogawa K."/>
            <person name="Ogiwara A."/>
            <person name="Oudega B."/>
            <person name="Park S.-H."/>
            <person name="Parro V."/>
            <person name="Pohl T.M."/>
            <person name="Portetelle D."/>
            <person name="Porwollik S."/>
            <person name="Prescott A.M."/>
            <person name="Presecan E."/>
            <person name="Pujic P."/>
            <person name="Purnelle B."/>
            <person name="Rapoport G."/>
            <person name="Rey M."/>
            <person name="Reynolds S."/>
            <person name="Rieger M."/>
            <person name="Rivolta C."/>
            <person name="Rocha E."/>
            <person name="Roche B."/>
            <person name="Rose M."/>
            <person name="Sadaie Y."/>
            <person name="Sato T."/>
            <person name="Scanlan E."/>
            <person name="Schleich S."/>
            <person name="Schroeter R."/>
            <person name="Scoffone F."/>
            <person name="Sekiguchi J."/>
            <person name="Sekowska A."/>
            <person name="Seror S.J."/>
            <person name="Serror P."/>
            <person name="Shin B.-S."/>
            <person name="Soldo B."/>
            <person name="Sorokin A."/>
            <person name="Tacconi E."/>
            <person name="Takagi T."/>
            <person name="Takahashi H."/>
            <person name="Takemaru K."/>
            <person name="Takeuchi M."/>
            <person name="Tamakoshi A."/>
            <person name="Tanaka T."/>
            <person name="Terpstra P."/>
            <person name="Tognoni A."/>
            <person name="Tosato V."/>
            <person name="Uchiyama S."/>
            <person name="Vandenbol M."/>
            <person name="Vannier F."/>
            <person name="Vassarotti A."/>
            <person name="Viari A."/>
            <person name="Wambutt R."/>
            <person name="Wedler E."/>
            <person name="Wedler H."/>
            <person name="Weitzenegger T."/>
            <person name="Winters P."/>
            <person name="Wipat A."/>
            <person name="Yamamoto H."/>
            <person name="Yamane K."/>
            <person name="Yasumoto K."/>
            <person name="Yata K."/>
            <person name="Yoshida K."/>
            <person name="Yoshikawa H.-F."/>
            <person name="Zumstein E."/>
            <person name="Yoshikawa H."/>
            <person name="Danchin A."/>
        </authorList>
    </citation>
    <scope>NUCLEOTIDE SEQUENCE [LARGE SCALE GENOMIC DNA]</scope>
    <source>
        <strain>168</strain>
    </source>
</reference>
<reference key="4">
    <citation type="journal article" date="2011" name="Microbiology">
        <title>Bacillus subtilis Fur represses one of two paralogous haem-degrading monooxygenases.</title>
        <authorList>
            <person name="Gaballa A."/>
            <person name="Helmann J.D."/>
        </authorList>
    </citation>
    <scope>FUNCTION</scope>
    <scope>MUTAGENESIS OF ASN-70</scope>
    <scope>DISRUPTION PHENOTYPE</scope>
    <scope>INDUCTION</scope>
    <scope>NOMENCLATURE</scope>
</reference>
<proteinExistence type="evidence at protein level"/>
<dbReference type="EC" id="1.14.14.18" evidence="2"/>
<dbReference type="EMBL" id="L10630">
    <property type="protein sequence ID" value="AAA71941.1"/>
    <property type="molecule type" value="Genomic_DNA"/>
</dbReference>
<dbReference type="EMBL" id="Y14083">
    <property type="protein sequence ID" value="CAA74516.1"/>
    <property type="molecule type" value="Genomic_DNA"/>
</dbReference>
<dbReference type="EMBL" id="AL009126">
    <property type="protein sequence ID" value="CAB12850.1"/>
    <property type="molecule type" value="Genomic_DNA"/>
</dbReference>
<dbReference type="PIR" id="B40614">
    <property type="entry name" value="B40614"/>
</dbReference>
<dbReference type="RefSeq" id="NP_388891.1">
    <property type="nucleotide sequence ID" value="NC_000964.3"/>
</dbReference>
<dbReference type="RefSeq" id="WP_003244748.1">
    <property type="nucleotide sequence ID" value="NZ_OZ025638.1"/>
</dbReference>
<dbReference type="PDB" id="4OZ5">
    <property type="method" value="X-ray"/>
    <property type="resolution" value="2.71 A"/>
    <property type="chains" value="A=1-166"/>
</dbReference>
<dbReference type="PDBsum" id="4OZ5"/>
<dbReference type="SMR" id="P38049"/>
<dbReference type="FunCoup" id="P38049">
    <property type="interactions" value="4"/>
</dbReference>
<dbReference type="STRING" id="224308.BSU10100"/>
<dbReference type="PaxDb" id="224308-BSU10100"/>
<dbReference type="EnsemblBacteria" id="CAB12850">
    <property type="protein sequence ID" value="CAB12850"/>
    <property type="gene ID" value="BSU_10100"/>
</dbReference>
<dbReference type="GeneID" id="939297"/>
<dbReference type="KEGG" id="bsu:BSU10100"/>
<dbReference type="PATRIC" id="fig|224308.179.peg.1086"/>
<dbReference type="eggNOG" id="COG2329">
    <property type="taxonomic scope" value="Bacteria"/>
</dbReference>
<dbReference type="InParanoid" id="P38049"/>
<dbReference type="OrthoDB" id="2352283at2"/>
<dbReference type="PhylomeDB" id="P38049"/>
<dbReference type="BioCyc" id="BSUB:BSU10100-MONOMER"/>
<dbReference type="EvolutionaryTrace" id="P38049"/>
<dbReference type="Proteomes" id="UP000001570">
    <property type="component" value="Chromosome"/>
</dbReference>
<dbReference type="GO" id="GO:0005737">
    <property type="term" value="C:cytoplasm"/>
    <property type="evidence" value="ECO:0007669"/>
    <property type="project" value="UniProtKB-SubCell"/>
</dbReference>
<dbReference type="GO" id="GO:0004392">
    <property type="term" value="F:heme oxygenase (decyclizing) activity"/>
    <property type="evidence" value="ECO:0000318"/>
    <property type="project" value="GO_Central"/>
</dbReference>
<dbReference type="GO" id="GO:0046872">
    <property type="term" value="F:metal ion binding"/>
    <property type="evidence" value="ECO:0007669"/>
    <property type="project" value="UniProtKB-KW"/>
</dbReference>
<dbReference type="GO" id="GO:0042167">
    <property type="term" value="P:heme catabolic process"/>
    <property type="evidence" value="ECO:0000318"/>
    <property type="project" value="GO_Central"/>
</dbReference>
<dbReference type="Gene3D" id="3.30.70.100">
    <property type="match status" value="1"/>
</dbReference>
<dbReference type="InterPro" id="IPR007138">
    <property type="entry name" value="ABM_dom"/>
</dbReference>
<dbReference type="InterPro" id="IPR011008">
    <property type="entry name" value="Dimeric_a/b-barrel"/>
</dbReference>
<dbReference type="InterPro" id="IPR050404">
    <property type="entry name" value="Heme-degrading_MO"/>
</dbReference>
<dbReference type="PANTHER" id="PTHR34474">
    <property type="entry name" value="SIGNAL TRANSDUCTION PROTEIN TRAP"/>
    <property type="match status" value="1"/>
</dbReference>
<dbReference type="PANTHER" id="PTHR34474:SF2">
    <property type="entry name" value="SIGNAL TRANSDUCTION PROTEIN TRAP"/>
    <property type="match status" value="1"/>
</dbReference>
<dbReference type="Pfam" id="PF03992">
    <property type="entry name" value="ABM"/>
    <property type="match status" value="1"/>
</dbReference>
<dbReference type="SUPFAM" id="SSF54909">
    <property type="entry name" value="Dimeric alpha+beta barrel"/>
    <property type="match status" value="1"/>
</dbReference>
<dbReference type="PROSITE" id="PS51725">
    <property type="entry name" value="ABM"/>
    <property type="match status" value="1"/>
</dbReference>
<accession>P38049</accession>
<name>HMOB_BACSU</name>
<gene>
    <name type="primary">hmoB</name>
    <name type="synonym">yhgC</name>
    <name type="synonym">yixC</name>
    <name type="ordered locus">BSU10100</name>
</gene>
<organism>
    <name type="scientific">Bacillus subtilis (strain 168)</name>
    <dbReference type="NCBI Taxonomy" id="224308"/>
    <lineage>
        <taxon>Bacteria</taxon>
        <taxon>Bacillati</taxon>
        <taxon>Bacillota</taxon>
        <taxon>Bacilli</taxon>
        <taxon>Bacillales</taxon>
        <taxon>Bacillaceae</taxon>
        <taxon>Bacillus</taxon>
    </lineage>
</organism>
<comment type="function">
    <text evidence="4">Catalyzes the oxidative degradation of the heme macrocyclic porphyrin ring in the presence of a suitable electron donor such as ascorbate or NADPH--cytochrome P450 reductase, with subsequent release of free iron.</text>
</comment>
<comment type="catalytic activity">
    <reaction evidence="2">
        <text>heme b + 3 reduced [NADPH--hemoprotein reductase] + 3 O2 = biliverdin IXalpha + CO + Fe(2+) + 3 oxidized [NADPH--hemoprotein reductase] + 3 H2O + H(+)</text>
        <dbReference type="Rhea" id="RHEA:21764"/>
        <dbReference type="Rhea" id="RHEA-COMP:11964"/>
        <dbReference type="Rhea" id="RHEA-COMP:11965"/>
        <dbReference type="ChEBI" id="CHEBI:15377"/>
        <dbReference type="ChEBI" id="CHEBI:15378"/>
        <dbReference type="ChEBI" id="CHEBI:15379"/>
        <dbReference type="ChEBI" id="CHEBI:17245"/>
        <dbReference type="ChEBI" id="CHEBI:29033"/>
        <dbReference type="ChEBI" id="CHEBI:57618"/>
        <dbReference type="ChEBI" id="CHEBI:57991"/>
        <dbReference type="ChEBI" id="CHEBI:58210"/>
        <dbReference type="ChEBI" id="CHEBI:60344"/>
        <dbReference type="EC" id="1.14.14.18"/>
    </reaction>
</comment>
<comment type="subunit">
    <text evidence="2">Homodimer.</text>
</comment>
<comment type="subcellular location">
    <subcellularLocation>
        <location evidence="1">Cytoplasm</location>
    </subcellularLocation>
</comment>
<comment type="induction">
    <text evidence="4">Constitutively expressed.</text>
</comment>
<comment type="disruption phenotype">
    <text evidence="4">Neither hmoB single mutant nor the hmoA hmoB double mutant display robust and reproducible phenotypes relative to the wild-type.</text>
</comment>
<comment type="similarity">
    <text evidence="5">Belongs to the antibiotic biosynthesis monooxygenase family.</text>
</comment>